<accession>P38542</accession>
<accession>A8Q704</accession>
<gene>
    <name type="ORF">Bm1_44725</name>
</gene>
<keyword id="KW-0342">GTP-binding</keyword>
<keyword id="KW-0547">Nucleotide-binding</keyword>
<keyword id="KW-0539">Nucleus</keyword>
<keyword id="KW-0653">Protein transport</keyword>
<keyword id="KW-1185">Reference proteome</keyword>
<keyword id="KW-0813">Transport</keyword>
<sequence>MATGDDIPTFKLVLVGDGGTGKTTFVKRHLTGEFEKKYVATLGVEVHPLIFHTNRGQIRFNVWDTAGQEKFGGLRDGYYIQGQCAIIMFDVTARVTYKNVPNWHRDLVRVCENIPIVLCGNKVDVKDRKVKAKTITFHRKKNLQYYDISAKSNYNFEKPFLWLARKLLGDPNLEFVAMPALAPPEVQMDPTMVAQYEQEIAAAANAELPDDDEDL</sequence>
<reference key="1">
    <citation type="journal article" date="1992" name="Mol. Biochem. Parasitol.">
        <title>Filarial parasites contain a ras homolog of the TC4/ran/Spil family.</title>
        <authorList>
            <person name="Dissanayake S."/>
            <person name="Xu M."/>
            <person name="Piessens W.F."/>
        </authorList>
    </citation>
    <scope>NUCLEOTIDE SEQUENCE [MRNA]</scope>
</reference>
<reference key="2">
    <citation type="journal article" date="2007" name="Science">
        <title>Draft genome of the filarial nematode parasite Brugia malayi.</title>
        <authorList>
            <person name="Ghedin E."/>
            <person name="Wang S."/>
            <person name="Spiro D."/>
            <person name="Caler E."/>
            <person name="Zhao Q."/>
            <person name="Crabtree J."/>
            <person name="Allen J.E."/>
            <person name="Delcher A.L."/>
            <person name="Guiliano D.B."/>
            <person name="Miranda-Saavedra D."/>
            <person name="Angiuoli S.V."/>
            <person name="Creasy T."/>
            <person name="Amedeo P."/>
            <person name="Haas B."/>
            <person name="El-Sayed N.M."/>
            <person name="Wortman J.R."/>
            <person name="Feldblyum T."/>
            <person name="Tallon L."/>
            <person name="Schatz M."/>
            <person name="Shumway M."/>
            <person name="Koo H."/>
            <person name="Salzberg S.L."/>
            <person name="Schobel S."/>
            <person name="Pertea M."/>
            <person name="Pop M."/>
            <person name="White O."/>
            <person name="Barton G.J."/>
            <person name="Carlow C.K.S."/>
            <person name="Crawford M.J."/>
            <person name="Daub J."/>
            <person name="Dimmic M.W."/>
            <person name="Estes C.F."/>
            <person name="Foster J.M."/>
            <person name="Ganatra M."/>
            <person name="Gregory W.F."/>
            <person name="Johnson N.M."/>
            <person name="Jin J."/>
            <person name="Komuniecki R."/>
            <person name="Korf I."/>
            <person name="Kumar S."/>
            <person name="Laney S."/>
            <person name="Li B.-W."/>
            <person name="Li W."/>
            <person name="Lindblom T.H."/>
            <person name="Lustigman S."/>
            <person name="Ma D."/>
            <person name="Maina C.V."/>
            <person name="Martin D.M."/>
            <person name="McCarter J.P."/>
            <person name="McReynolds L."/>
            <person name="Mitreva M."/>
            <person name="Nutman T.B."/>
            <person name="Parkinson J."/>
            <person name="Peregrin-Alvarez J.M."/>
            <person name="Poole C."/>
            <person name="Ren Q."/>
            <person name="Saunders L."/>
            <person name="Sluder A.E."/>
            <person name="Smith K."/>
            <person name="Stanke M."/>
            <person name="Unnasch T.R."/>
            <person name="Ware J."/>
            <person name="Wei A.D."/>
            <person name="Weil G."/>
            <person name="Williams D.J."/>
            <person name="Zhang Y."/>
            <person name="Williams S.A."/>
            <person name="Fraser-Liggett C."/>
            <person name="Slatko B."/>
            <person name="Blaxter M.L."/>
            <person name="Scott A.L."/>
        </authorList>
    </citation>
    <scope>NUCLEOTIDE SEQUENCE [LARGE SCALE GENOMIC DNA]</scope>
</reference>
<dbReference type="EMBL" id="M98810">
    <property type="status" value="NOT_ANNOTATED_CDS"/>
    <property type="molecule type" value="mRNA"/>
</dbReference>
<dbReference type="EMBL" id="DS239418">
    <property type="protein sequence ID" value="EDP30622.1"/>
    <property type="molecule type" value="Genomic_DNA"/>
</dbReference>
<dbReference type="PIR" id="A48463">
    <property type="entry name" value="A48463"/>
</dbReference>
<dbReference type="SMR" id="P38542"/>
<dbReference type="FunCoup" id="P38542">
    <property type="interactions" value="2132"/>
</dbReference>
<dbReference type="STRING" id="6279.P38542"/>
<dbReference type="EnsemblMetazoa" id="Bm4731.1">
    <property type="protein sequence ID" value="Bm4731.1"/>
    <property type="gene ID" value="WBGene00224992"/>
</dbReference>
<dbReference type="GeneID" id="6103829"/>
<dbReference type="KEGG" id="bmy:BM_BM4731"/>
<dbReference type="CTD" id="6103829"/>
<dbReference type="WormBase" id="Bm4731">
    <property type="protein sequence ID" value="BM38293"/>
    <property type="gene ID" value="WBGene00224992"/>
    <property type="gene designation" value="Bma-ran-1"/>
</dbReference>
<dbReference type="InParanoid" id="P38542"/>
<dbReference type="OrthoDB" id="48625at2759"/>
<dbReference type="Proteomes" id="UP000006672">
    <property type="component" value="Unassembled WGS sequence"/>
</dbReference>
<dbReference type="GO" id="GO:0005737">
    <property type="term" value="C:cytoplasm"/>
    <property type="evidence" value="ECO:0007669"/>
    <property type="project" value="TreeGrafter"/>
</dbReference>
<dbReference type="GO" id="GO:0005634">
    <property type="term" value="C:nucleus"/>
    <property type="evidence" value="ECO:0007669"/>
    <property type="project" value="UniProtKB-SubCell"/>
</dbReference>
<dbReference type="GO" id="GO:0005525">
    <property type="term" value="F:GTP binding"/>
    <property type="evidence" value="ECO:0007669"/>
    <property type="project" value="UniProtKB-KW"/>
</dbReference>
<dbReference type="GO" id="GO:0003924">
    <property type="term" value="F:GTPase activity"/>
    <property type="evidence" value="ECO:0007669"/>
    <property type="project" value="InterPro"/>
</dbReference>
<dbReference type="GO" id="GO:0009792">
    <property type="term" value="P:embryo development ending in birth or egg hatching"/>
    <property type="evidence" value="ECO:0007669"/>
    <property type="project" value="EnsemblMetazoa"/>
</dbReference>
<dbReference type="GO" id="GO:0048477">
    <property type="term" value="P:oogenesis"/>
    <property type="evidence" value="ECO:0007669"/>
    <property type="project" value="EnsemblMetazoa"/>
</dbReference>
<dbReference type="GO" id="GO:0006606">
    <property type="term" value="P:protein import into nucleus"/>
    <property type="evidence" value="ECO:0007669"/>
    <property type="project" value="TreeGrafter"/>
</dbReference>
<dbReference type="GO" id="GO:0000054">
    <property type="term" value="P:ribosomal subunit export from nucleus"/>
    <property type="evidence" value="ECO:0007669"/>
    <property type="project" value="TreeGrafter"/>
</dbReference>
<dbReference type="CDD" id="cd00877">
    <property type="entry name" value="Ran"/>
    <property type="match status" value="1"/>
</dbReference>
<dbReference type="FunFam" id="3.40.50.300:FF:000131">
    <property type="entry name" value="GTP-binding nuclear protein Ran"/>
    <property type="match status" value="1"/>
</dbReference>
<dbReference type="Gene3D" id="3.40.50.300">
    <property type="entry name" value="P-loop containing nucleotide triphosphate hydrolases"/>
    <property type="match status" value="1"/>
</dbReference>
<dbReference type="InterPro" id="IPR027417">
    <property type="entry name" value="P-loop_NTPase"/>
</dbReference>
<dbReference type="InterPro" id="IPR002041">
    <property type="entry name" value="Ran_GTPase"/>
</dbReference>
<dbReference type="InterPro" id="IPR005225">
    <property type="entry name" value="Small_GTP-bd"/>
</dbReference>
<dbReference type="InterPro" id="IPR001806">
    <property type="entry name" value="Small_GTPase"/>
</dbReference>
<dbReference type="NCBIfam" id="TIGR00231">
    <property type="entry name" value="small_GTP"/>
    <property type="match status" value="1"/>
</dbReference>
<dbReference type="PANTHER" id="PTHR24071:SF0">
    <property type="entry name" value="GTP-BINDING NUCLEAR PROTEIN RAN"/>
    <property type="match status" value="1"/>
</dbReference>
<dbReference type="PANTHER" id="PTHR24071">
    <property type="entry name" value="RAN GTPASE"/>
    <property type="match status" value="1"/>
</dbReference>
<dbReference type="Pfam" id="PF00071">
    <property type="entry name" value="Ras"/>
    <property type="match status" value="1"/>
</dbReference>
<dbReference type="PRINTS" id="PR00627">
    <property type="entry name" value="GTPRANTC4"/>
</dbReference>
<dbReference type="SMART" id="SM00175">
    <property type="entry name" value="RAB"/>
    <property type="match status" value="1"/>
</dbReference>
<dbReference type="SMART" id="SM00176">
    <property type="entry name" value="RAN"/>
    <property type="match status" value="1"/>
</dbReference>
<dbReference type="SMART" id="SM00173">
    <property type="entry name" value="RAS"/>
    <property type="match status" value="1"/>
</dbReference>
<dbReference type="SMART" id="SM00174">
    <property type="entry name" value="RHO"/>
    <property type="match status" value="1"/>
</dbReference>
<dbReference type="SUPFAM" id="SSF52540">
    <property type="entry name" value="P-loop containing nucleoside triphosphate hydrolases"/>
    <property type="match status" value="1"/>
</dbReference>
<dbReference type="PROSITE" id="PS51418">
    <property type="entry name" value="RAN"/>
    <property type="match status" value="1"/>
</dbReference>
<proteinExistence type="evidence at transcript level"/>
<name>RAN_BRUMA</name>
<organism>
    <name type="scientific">Brugia malayi</name>
    <name type="common">Filarial nematode worm</name>
    <dbReference type="NCBI Taxonomy" id="6279"/>
    <lineage>
        <taxon>Eukaryota</taxon>
        <taxon>Metazoa</taxon>
        <taxon>Ecdysozoa</taxon>
        <taxon>Nematoda</taxon>
        <taxon>Chromadorea</taxon>
        <taxon>Rhabditida</taxon>
        <taxon>Spirurina</taxon>
        <taxon>Spiruromorpha</taxon>
        <taxon>Filarioidea</taxon>
        <taxon>Onchocercidae</taxon>
        <taxon>Brugia</taxon>
    </lineage>
</organism>
<feature type="chain" id="PRO_0000208707" description="GTP-binding nuclear protein Ran">
    <location>
        <begin position="1"/>
        <end position="215"/>
    </location>
</feature>
<feature type="domain" description="Small GTPase Ran-type" evidence="3">
    <location>
        <begin position="6"/>
        <end position="170"/>
    </location>
</feature>
<feature type="region of interest" description="Switch-I" evidence="3">
    <location>
        <begin position="36"/>
        <end position="44"/>
    </location>
</feature>
<feature type="region of interest" description="Switch-II" evidence="3">
    <location>
        <begin position="67"/>
        <end position="83"/>
    </location>
</feature>
<feature type="binding site" evidence="2">
    <location>
        <begin position="17"/>
        <end position="24"/>
    </location>
    <ligand>
        <name>GTP</name>
        <dbReference type="ChEBI" id="CHEBI:37565"/>
    </ligand>
</feature>
<feature type="binding site" evidence="2">
    <location>
        <begin position="35"/>
        <end position="41"/>
    </location>
    <ligand>
        <name>GTP</name>
        <dbReference type="ChEBI" id="CHEBI:37565"/>
    </ligand>
</feature>
<feature type="binding site" evidence="2">
    <location>
        <position position="67"/>
    </location>
    <ligand>
        <name>GTP</name>
        <dbReference type="ChEBI" id="CHEBI:37565"/>
    </ligand>
</feature>
<feature type="binding site" evidence="2">
    <location>
        <begin position="121"/>
        <end position="124"/>
    </location>
    <ligand>
        <name>GTP</name>
        <dbReference type="ChEBI" id="CHEBI:37565"/>
    </ligand>
</feature>
<feature type="binding site" evidence="2">
    <location>
        <begin position="149"/>
        <end position="151"/>
    </location>
    <ligand>
        <name>GTP</name>
        <dbReference type="ChEBI" id="CHEBI:37565"/>
    </ligand>
</feature>
<feature type="sequence conflict" description="In Ref. 1; M98810." evidence="4" ref="1">
    <original>E</original>
    <variation>D</variation>
    <location>
        <position position="33"/>
    </location>
</feature>
<feature type="sequence conflict" description="In Ref. 1; M98810." evidence="4" ref="1">
    <original>II</original>
    <variation>FN</variation>
    <location>
        <begin position="86"/>
        <end position="87"/>
    </location>
</feature>
<feature type="sequence conflict" description="In Ref. 1; M98810." evidence="4" ref="1">
    <original>F</original>
    <variation>S</variation>
    <location>
        <position position="160"/>
    </location>
</feature>
<protein>
    <recommendedName>
        <fullName>GTP-binding nuclear protein Ran</fullName>
    </recommendedName>
    <alternativeName>
        <fullName>GTPase Ran</fullName>
    </alternativeName>
    <alternativeName>
        <fullName>Ras-like protein TC4</fullName>
    </alternativeName>
</protein>
<evidence type="ECO:0000250" key="1"/>
<evidence type="ECO:0000250" key="2">
    <source>
        <dbReference type="UniProtKB" id="P62825"/>
    </source>
</evidence>
<evidence type="ECO:0000255" key="3">
    <source>
        <dbReference type="PROSITE-ProRule" id="PRU00752"/>
    </source>
</evidence>
<evidence type="ECO:0000305" key="4"/>
<comment type="function">
    <text evidence="1">GTP-binding protein involved in nucleocytoplasmic transport. Required for the import of protein into the nucleus and also for RNA export. Involved in chromatin condensation and control of cell cycle (By similarity).</text>
</comment>
<comment type="subunit">
    <text evidence="2">Found in a nuclear export complex with RanGTP, exportin and pre-miRNA (By similarity).</text>
</comment>
<comment type="subcellular location">
    <subcellularLocation>
        <location evidence="1">Nucleus</location>
    </subcellularLocation>
</comment>
<comment type="similarity">
    <text evidence="3 4">Belongs to the small GTPase superfamily. Ran family.</text>
</comment>